<feature type="chain" id="PRO_0000213480" description="Uncharacterized protein ZK1307.3">
    <location>
        <begin position="1"/>
        <end position="115"/>
    </location>
</feature>
<feature type="domain" description="MSP" evidence="1">
    <location>
        <begin position="1"/>
        <end position="115"/>
    </location>
</feature>
<evidence type="ECO:0000255" key="1">
    <source>
        <dbReference type="PROSITE-ProRule" id="PRU00132"/>
    </source>
</evidence>
<sequence length="115" mass="12435">MGVEISLDPPVCPIQANGGVSKHKMINHCDKILAFKVKSSNNSNYSVNLIYGILKVCDVKELVITRKPGKPQADKLIIQYCMVEDENADPKPLFANGVPPGELSGETVIKLSAAE</sequence>
<name>YS13_CAEEL</name>
<organism>
    <name type="scientific">Caenorhabditis elegans</name>
    <dbReference type="NCBI Taxonomy" id="6239"/>
    <lineage>
        <taxon>Eukaryota</taxon>
        <taxon>Metazoa</taxon>
        <taxon>Ecdysozoa</taxon>
        <taxon>Nematoda</taxon>
        <taxon>Chromadorea</taxon>
        <taxon>Rhabditida</taxon>
        <taxon>Rhabditina</taxon>
        <taxon>Rhabditomorpha</taxon>
        <taxon>Rhabditoidea</taxon>
        <taxon>Rhabditidae</taxon>
        <taxon>Peloderinae</taxon>
        <taxon>Caenorhabditis</taxon>
    </lineage>
</organism>
<gene>
    <name type="ORF">ZK1307.3</name>
</gene>
<reference key="1">
    <citation type="journal article" date="1998" name="Science">
        <title>Genome sequence of the nematode C. elegans: a platform for investigating biology.</title>
        <authorList>
            <consortium name="The C. elegans sequencing consortium"/>
        </authorList>
    </citation>
    <scope>NUCLEOTIDE SEQUENCE [LARGE SCALE GENOMIC DNA]</scope>
    <source>
        <strain>Bristol N2</strain>
    </source>
</reference>
<protein>
    <recommendedName>
        <fullName>Uncharacterized protein ZK1307.3</fullName>
    </recommendedName>
</protein>
<dbReference type="EMBL" id="Z47358">
    <property type="protein sequence ID" value="CAA87431.1"/>
    <property type="molecule type" value="Genomic_DNA"/>
</dbReference>
<dbReference type="PIR" id="T27728">
    <property type="entry name" value="T27728"/>
</dbReference>
<dbReference type="RefSeq" id="NP_496079.1">
    <property type="nucleotide sequence ID" value="NM_063678.4"/>
</dbReference>
<dbReference type="SMR" id="Q09361"/>
<dbReference type="FunCoup" id="Q09361">
    <property type="interactions" value="2"/>
</dbReference>
<dbReference type="PaxDb" id="6239-ZK1307.3"/>
<dbReference type="PeptideAtlas" id="Q09361"/>
<dbReference type="EnsemblMetazoa" id="ZK1307.3.1">
    <property type="protein sequence ID" value="ZK1307.3.1"/>
    <property type="gene ID" value="WBGene00014246"/>
</dbReference>
<dbReference type="GeneID" id="191560"/>
<dbReference type="KEGG" id="cel:CELE_ZK1307.3"/>
<dbReference type="UCSC" id="ZK1307.3">
    <property type="organism name" value="c. elegans"/>
</dbReference>
<dbReference type="AGR" id="WB:WBGene00014246"/>
<dbReference type="CTD" id="191560"/>
<dbReference type="WormBase" id="ZK1307.3">
    <property type="protein sequence ID" value="CE01692"/>
    <property type="gene ID" value="WBGene00014246"/>
</dbReference>
<dbReference type="eggNOG" id="ENOG502SV84">
    <property type="taxonomic scope" value="Eukaryota"/>
</dbReference>
<dbReference type="GeneTree" id="ENSGT00970000195921"/>
<dbReference type="HOGENOM" id="CLU_147608_1_0_1"/>
<dbReference type="InParanoid" id="Q09361"/>
<dbReference type="OMA" id="MAIEYFP"/>
<dbReference type="OrthoDB" id="5793629at2759"/>
<dbReference type="PhylomeDB" id="Q09361"/>
<dbReference type="PRO" id="PR:Q09361"/>
<dbReference type="Proteomes" id="UP000001940">
    <property type="component" value="Chromosome II"/>
</dbReference>
<dbReference type="Bgee" id="WBGene00014246">
    <property type="expression patterns" value="Expressed in larva and 1 other cell type or tissue"/>
</dbReference>
<dbReference type="Gene3D" id="2.60.40.10">
    <property type="entry name" value="Immunoglobulins"/>
    <property type="match status" value="1"/>
</dbReference>
<dbReference type="InterPro" id="IPR013783">
    <property type="entry name" value="Ig-like_fold"/>
</dbReference>
<dbReference type="InterPro" id="IPR000535">
    <property type="entry name" value="MSP_dom"/>
</dbReference>
<dbReference type="InterPro" id="IPR008962">
    <property type="entry name" value="PapD-like_sf"/>
</dbReference>
<dbReference type="InterPro" id="IPR051774">
    <property type="entry name" value="Sperm-specific_class_P"/>
</dbReference>
<dbReference type="PANTHER" id="PTHR22947">
    <property type="entry name" value="MAJOR SPERM PROTEIN"/>
    <property type="match status" value="1"/>
</dbReference>
<dbReference type="PANTHER" id="PTHR22947:SF40">
    <property type="entry name" value="MSP DOMAIN-CONTAINING PROTEIN"/>
    <property type="match status" value="1"/>
</dbReference>
<dbReference type="Pfam" id="PF00635">
    <property type="entry name" value="Motile_Sperm"/>
    <property type="match status" value="1"/>
</dbReference>
<dbReference type="SUPFAM" id="SSF49354">
    <property type="entry name" value="PapD-like"/>
    <property type="match status" value="1"/>
</dbReference>
<dbReference type="PROSITE" id="PS50202">
    <property type="entry name" value="MSP"/>
    <property type="match status" value="1"/>
</dbReference>
<keyword id="KW-1185">Reference proteome</keyword>
<proteinExistence type="predicted"/>
<accession>Q09361</accession>